<keyword id="KW-0067">ATP-binding</keyword>
<keyword id="KW-0131">Cell cycle</keyword>
<keyword id="KW-0132">Cell division</keyword>
<keyword id="KW-0133">Cell shape</keyword>
<keyword id="KW-0961">Cell wall biogenesis/degradation</keyword>
<keyword id="KW-0963">Cytoplasm</keyword>
<keyword id="KW-0436">Ligase</keyword>
<keyword id="KW-0547">Nucleotide-binding</keyword>
<keyword id="KW-0573">Peptidoglycan synthesis</keyword>
<keyword id="KW-1185">Reference proteome</keyword>
<evidence type="ECO:0000255" key="1">
    <source>
        <dbReference type="HAMAP-Rule" id="MF_00208"/>
    </source>
</evidence>
<dbReference type="EC" id="6.3.2.7" evidence="1"/>
<dbReference type="EMBL" id="AE007317">
    <property type="protein sequence ID" value="AAL00188.1"/>
    <property type="molecule type" value="Genomic_DNA"/>
</dbReference>
<dbReference type="PIR" id="G98044">
    <property type="entry name" value="G98044"/>
</dbReference>
<dbReference type="RefSeq" id="NP_358977.1">
    <property type="nucleotide sequence ID" value="NC_003098.1"/>
</dbReference>
<dbReference type="RefSeq" id="WP_000590294.1">
    <property type="nucleotide sequence ID" value="NC_003098.1"/>
</dbReference>
<dbReference type="SMR" id="Q8CWQ5"/>
<dbReference type="STRING" id="171101.spr1384"/>
<dbReference type="KEGG" id="spr:spr1384"/>
<dbReference type="PATRIC" id="fig|171101.6.peg.1499"/>
<dbReference type="eggNOG" id="COG0769">
    <property type="taxonomic scope" value="Bacteria"/>
</dbReference>
<dbReference type="HOGENOM" id="CLU_022291_4_2_9"/>
<dbReference type="UniPathway" id="UPA00219"/>
<dbReference type="Proteomes" id="UP000000586">
    <property type="component" value="Chromosome"/>
</dbReference>
<dbReference type="GO" id="GO:0005737">
    <property type="term" value="C:cytoplasm"/>
    <property type="evidence" value="ECO:0007669"/>
    <property type="project" value="UniProtKB-SubCell"/>
</dbReference>
<dbReference type="GO" id="GO:0005524">
    <property type="term" value="F:ATP binding"/>
    <property type="evidence" value="ECO:0007669"/>
    <property type="project" value="UniProtKB-UniRule"/>
</dbReference>
<dbReference type="GO" id="GO:0000287">
    <property type="term" value="F:magnesium ion binding"/>
    <property type="evidence" value="ECO:0007669"/>
    <property type="project" value="UniProtKB-UniRule"/>
</dbReference>
<dbReference type="GO" id="GO:0047482">
    <property type="term" value="F:UDP-N-acetylmuramoyl-L-alanyl-D-glutamate-L-lysine ligase activity"/>
    <property type="evidence" value="ECO:0007669"/>
    <property type="project" value="UniProtKB-UniRule"/>
</dbReference>
<dbReference type="GO" id="GO:0051301">
    <property type="term" value="P:cell division"/>
    <property type="evidence" value="ECO:0007669"/>
    <property type="project" value="UniProtKB-KW"/>
</dbReference>
<dbReference type="GO" id="GO:0071555">
    <property type="term" value="P:cell wall organization"/>
    <property type="evidence" value="ECO:0007669"/>
    <property type="project" value="UniProtKB-KW"/>
</dbReference>
<dbReference type="GO" id="GO:0009252">
    <property type="term" value="P:peptidoglycan biosynthetic process"/>
    <property type="evidence" value="ECO:0007669"/>
    <property type="project" value="UniProtKB-UniRule"/>
</dbReference>
<dbReference type="GO" id="GO:0008360">
    <property type="term" value="P:regulation of cell shape"/>
    <property type="evidence" value="ECO:0007669"/>
    <property type="project" value="UniProtKB-KW"/>
</dbReference>
<dbReference type="Gene3D" id="3.90.190.20">
    <property type="entry name" value="Mur ligase, C-terminal domain"/>
    <property type="match status" value="1"/>
</dbReference>
<dbReference type="Gene3D" id="3.40.1190.10">
    <property type="entry name" value="Mur-like, catalytic domain"/>
    <property type="match status" value="1"/>
</dbReference>
<dbReference type="Gene3D" id="3.40.1390.10">
    <property type="entry name" value="MurE/MurF, N-terminal domain"/>
    <property type="match status" value="1"/>
</dbReference>
<dbReference type="HAMAP" id="MF_00208">
    <property type="entry name" value="MurE"/>
    <property type="match status" value="1"/>
</dbReference>
<dbReference type="InterPro" id="IPR036565">
    <property type="entry name" value="Mur-like_cat_sf"/>
</dbReference>
<dbReference type="InterPro" id="IPR004101">
    <property type="entry name" value="Mur_ligase_C"/>
</dbReference>
<dbReference type="InterPro" id="IPR036615">
    <property type="entry name" value="Mur_ligase_C_dom_sf"/>
</dbReference>
<dbReference type="InterPro" id="IPR013221">
    <property type="entry name" value="Mur_ligase_cen"/>
</dbReference>
<dbReference type="InterPro" id="IPR035911">
    <property type="entry name" value="MurE/MurF_N"/>
</dbReference>
<dbReference type="InterPro" id="IPR005761">
    <property type="entry name" value="UDP-N-AcMur-Glu-dNH2Pim_ligase"/>
</dbReference>
<dbReference type="NCBIfam" id="TIGR01085">
    <property type="entry name" value="murE"/>
    <property type="match status" value="1"/>
</dbReference>
<dbReference type="NCBIfam" id="NF010628">
    <property type="entry name" value="PRK14022.1"/>
    <property type="match status" value="1"/>
</dbReference>
<dbReference type="PANTHER" id="PTHR23135">
    <property type="entry name" value="MUR LIGASE FAMILY MEMBER"/>
    <property type="match status" value="1"/>
</dbReference>
<dbReference type="PANTHER" id="PTHR23135:SF4">
    <property type="entry name" value="UDP-N-ACETYLMURAMOYL-L-ALANYL-D-GLUTAMATE--2,6-DIAMINOPIMELATE LIGASE MURE HOMOLOG, CHLOROPLASTIC"/>
    <property type="match status" value="1"/>
</dbReference>
<dbReference type="Pfam" id="PF02875">
    <property type="entry name" value="Mur_ligase_C"/>
    <property type="match status" value="1"/>
</dbReference>
<dbReference type="Pfam" id="PF08245">
    <property type="entry name" value="Mur_ligase_M"/>
    <property type="match status" value="1"/>
</dbReference>
<dbReference type="SUPFAM" id="SSF53623">
    <property type="entry name" value="MurD-like peptide ligases, catalytic domain"/>
    <property type="match status" value="1"/>
</dbReference>
<dbReference type="SUPFAM" id="SSF53244">
    <property type="entry name" value="MurD-like peptide ligases, peptide-binding domain"/>
    <property type="match status" value="1"/>
</dbReference>
<dbReference type="SUPFAM" id="SSF63418">
    <property type="entry name" value="MurE/MurF N-terminal domain"/>
    <property type="match status" value="1"/>
</dbReference>
<proteinExistence type="inferred from homology"/>
<reference key="1">
    <citation type="journal article" date="2001" name="J. Bacteriol.">
        <title>Genome of the bacterium Streptococcus pneumoniae strain R6.</title>
        <authorList>
            <person name="Hoskins J."/>
            <person name="Alborn W.E. Jr."/>
            <person name="Arnold J."/>
            <person name="Blaszczak L.C."/>
            <person name="Burgett S."/>
            <person name="DeHoff B.S."/>
            <person name="Estrem S.T."/>
            <person name="Fritz L."/>
            <person name="Fu D.-J."/>
            <person name="Fuller W."/>
            <person name="Geringer C."/>
            <person name="Gilmour R."/>
            <person name="Glass J.S."/>
            <person name="Khoja H."/>
            <person name="Kraft A.R."/>
            <person name="Lagace R.E."/>
            <person name="LeBlanc D.J."/>
            <person name="Lee L.N."/>
            <person name="Lefkowitz E.J."/>
            <person name="Lu J."/>
            <person name="Matsushima P."/>
            <person name="McAhren S.M."/>
            <person name="McHenney M."/>
            <person name="McLeaster K."/>
            <person name="Mundy C.W."/>
            <person name="Nicas T.I."/>
            <person name="Norris F.H."/>
            <person name="O'Gara M."/>
            <person name="Peery R.B."/>
            <person name="Robertson G.T."/>
            <person name="Rockey P."/>
            <person name="Sun P.-M."/>
            <person name="Winkler M.E."/>
            <person name="Yang Y."/>
            <person name="Young-Bellido M."/>
            <person name="Zhao G."/>
            <person name="Zook C.A."/>
            <person name="Baltz R.H."/>
            <person name="Jaskunas S.R."/>
            <person name="Rosteck P.R. Jr."/>
            <person name="Skatrud P.L."/>
            <person name="Glass J.I."/>
        </authorList>
    </citation>
    <scope>NUCLEOTIDE SEQUENCE [LARGE SCALE GENOMIC DNA]</scope>
    <source>
        <strain>ATCC BAA-255 / R6</strain>
    </source>
</reference>
<sequence>MIKIETVLDILKKDGLFREIIDQGHYHYNYSKVIFDSISYDSRKVTEDTLFFAKGAAFKKEYLLSAITQGLAWYVAEKDYEVDIPVIIVNDIKKAMSLIAMEFYGNPQEKLKLLAFTGTKGKTTATYFAYNILSQGHRPAMLSTMNTTLDGETFFKSALTTPESIDLFDMMNQAVQNDRTHLIMEVSSQAYLVHRVYGLTFDVGVFLNITPDHIGPIEHPSFEDYFYHKRLLMENSRAVIINSDMDHFSVLKEQVEDQDHDFYGSQFDNQIENSKAFSFSATGKLAGDYDIQLIGNFNQENAVAAGLACLRLGASLEDIKKGIAATRVPGRMEVLTQKNGAKVFIDYAHNGDSLKKLINVVETHQTGKIALVLGSTGNKGESRRKDFGLLLNQHPEIQVFLTADDPNYEDPMAIADEISSYINHPVEKIADRQEAIKAAMAITNHELDAVIIAGKGADCYQIIQGKKESYPGDTAVAENYL</sequence>
<comment type="function">
    <text evidence="1">Catalyzes the addition of L-lysine to the nucleotide precursor UDP-N-acetylmuramoyl-L-alanyl-D-glutamate (UMAG) in the biosynthesis of bacterial cell-wall peptidoglycan.</text>
</comment>
<comment type="catalytic activity">
    <reaction evidence="1">
        <text>UDP-N-acetyl-alpha-D-muramoyl-L-alanyl-D-glutamate + L-lysine + ATP = UDP-N-acetyl-alpha-D-muramoyl-L-alanyl-gamma-D-glutamyl-L-lysine + ADP + phosphate + H(+)</text>
        <dbReference type="Rhea" id="RHEA:17969"/>
        <dbReference type="ChEBI" id="CHEBI:15378"/>
        <dbReference type="ChEBI" id="CHEBI:30616"/>
        <dbReference type="ChEBI" id="CHEBI:32551"/>
        <dbReference type="ChEBI" id="CHEBI:43474"/>
        <dbReference type="ChEBI" id="CHEBI:83900"/>
        <dbReference type="ChEBI" id="CHEBI:83903"/>
        <dbReference type="ChEBI" id="CHEBI:456216"/>
        <dbReference type="EC" id="6.3.2.7"/>
    </reaction>
</comment>
<comment type="pathway">
    <text evidence="1">Cell wall biogenesis; peptidoglycan biosynthesis.</text>
</comment>
<comment type="subcellular location">
    <subcellularLocation>
        <location evidence="1">Cytoplasm</location>
    </subcellularLocation>
</comment>
<comment type="PTM">
    <text evidence="1">Carboxylation is probably crucial for Mg(2+) binding and, consequently, for the gamma-phosphate positioning of ATP.</text>
</comment>
<comment type="similarity">
    <text evidence="1">Belongs to the MurCDEF family. MurE subfamily.</text>
</comment>
<feature type="chain" id="PRO_0000101954" description="UDP-N-acetylmuramoyl-L-alanyl-D-glutamate--L-lysine ligase">
    <location>
        <begin position="1"/>
        <end position="481"/>
    </location>
</feature>
<feature type="short sequence motif" description="L-lysine recognition motif">
    <location>
        <begin position="404"/>
        <end position="407"/>
    </location>
</feature>
<feature type="binding site" evidence="1">
    <location>
        <position position="42"/>
    </location>
    <ligand>
        <name>UDP-N-acetyl-alpha-D-muramoyl-L-alanyl-D-glutamate</name>
        <dbReference type="ChEBI" id="CHEBI:83900"/>
    </ligand>
</feature>
<feature type="binding site" evidence="1">
    <location>
        <begin position="118"/>
        <end position="124"/>
    </location>
    <ligand>
        <name>ATP</name>
        <dbReference type="ChEBI" id="CHEBI:30616"/>
    </ligand>
</feature>
<feature type="binding site" evidence="1">
    <location>
        <begin position="160"/>
        <end position="161"/>
    </location>
    <ligand>
        <name>UDP-N-acetyl-alpha-D-muramoyl-L-alanyl-D-glutamate</name>
        <dbReference type="ChEBI" id="CHEBI:83900"/>
    </ligand>
</feature>
<feature type="binding site" evidence="1">
    <location>
        <position position="187"/>
    </location>
    <ligand>
        <name>UDP-N-acetyl-alpha-D-muramoyl-L-alanyl-D-glutamate</name>
        <dbReference type="ChEBI" id="CHEBI:83900"/>
    </ligand>
</feature>
<feature type="binding site" evidence="1">
    <location>
        <position position="195"/>
    </location>
    <ligand>
        <name>UDP-N-acetyl-alpha-D-muramoyl-L-alanyl-D-glutamate</name>
        <dbReference type="ChEBI" id="CHEBI:83900"/>
    </ligand>
</feature>
<feature type="modified residue" description="N6-carboxylysine" evidence="1">
    <location>
        <position position="229"/>
    </location>
</feature>
<protein>
    <recommendedName>
        <fullName evidence="1">UDP-N-acetylmuramoyl-L-alanyl-D-glutamate--L-lysine ligase</fullName>
        <ecNumber evidence="1">6.3.2.7</ecNumber>
    </recommendedName>
    <alternativeName>
        <fullName evidence="1">L-lysine-adding enzyme</fullName>
    </alternativeName>
    <alternativeName>
        <fullName evidence="1">UDP-MurNAc-L-Ala-D-Glu:L-Lys ligase</fullName>
    </alternativeName>
    <alternativeName>
        <fullName evidence="1">UDP-MurNAc-tripeptide synthetase</fullName>
    </alternativeName>
    <alternativeName>
        <fullName evidence="1">UDP-N-acetylmuramyl-tripeptide synthetase</fullName>
    </alternativeName>
</protein>
<name>MURE_STRR6</name>
<accession>Q8CWQ5</accession>
<organism>
    <name type="scientific">Streptococcus pneumoniae (strain ATCC BAA-255 / R6)</name>
    <dbReference type="NCBI Taxonomy" id="171101"/>
    <lineage>
        <taxon>Bacteria</taxon>
        <taxon>Bacillati</taxon>
        <taxon>Bacillota</taxon>
        <taxon>Bacilli</taxon>
        <taxon>Lactobacillales</taxon>
        <taxon>Streptococcaceae</taxon>
        <taxon>Streptococcus</taxon>
    </lineage>
</organism>
<gene>
    <name evidence="1" type="primary">murE</name>
    <name type="ordered locus">spr1384</name>
</gene>